<accession>Q62421</accession>
<accession>Q8R0B7</accession>
<protein>
    <recommendedName>
        <fullName>Endophilin-A3</fullName>
    </recommendedName>
    <alternativeName>
        <fullName>Endophilin-3</fullName>
    </alternativeName>
    <alternativeName>
        <fullName>SH3 domain protein 2C</fullName>
    </alternativeName>
    <alternativeName>
        <fullName>SH3 domain-containing GRB2-like protein 3</fullName>
    </alternativeName>
    <alternativeName>
        <fullName>SH3p13</fullName>
    </alternativeName>
</protein>
<reference key="1">
    <citation type="journal article" date="1996" name="Nat. Biotechnol.">
        <title>Cloning of ligand targets: systematic isolation of SH3 domain-containing proteins.</title>
        <authorList>
            <person name="Sparks A.B."/>
            <person name="Hoffman N.G."/>
            <person name="McConnell S.J."/>
            <person name="Fowlkes D.M."/>
            <person name="Kay B.K."/>
        </authorList>
    </citation>
    <scope>NUCLEOTIDE SEQUENCE [MRNA]</scope>
    <source>
        <tissue>Embryo</tissue>
    </source>
</reference>
<reference key="2">
    <citation type="journal article" date="2004" name="Genome Res.">
        <title>The status, quality, and expansion of the NIH full-length cDNA project: the Mammalian Gene Collection (MGC).</title>
        <authorList>
            <consortium name="The MGC Project Team"/>
        </authorList>
    </citation>
    <scope>NUCLEOTIDE SEQUENCE [LARGE SCALE MRNA]</scope>
    <source>
        <tissue>Mammary gland</tissue>
    </source>
</reference>
<reference key="3">
    <citation type="journal article" date="2010" name="Cell">
        <title>A tissue-specific atlas of mouse protein phosphorylation and expression.</title>
        <authorList>
            <person name="Huttlin E.L."/>
            <person name="Jedrychowski M.P."/>
            <person name="Elias J.E."/>
            <person name="Goswami T."/>
            <person name="Rad R."/>
            <person name="Beausoleil S.A."/>
            <person name="Villen J."/>
            <person name="Haas W."/>
            <person name="Sowa M.E."/>
            <person name="Gygi S.P."/>
        </authorList>
    </citation>
    <scope>IDENTIFICATION BY MASS SPECTROMETRY [LARGE SCALE ANALYSIS]</scope>
    <source>
        <tissue>Brain</tissue>
        <tissue>Testis</tissue>
    </source>
</reference>
<proteinExistence type="evidence at protein level"/>
<keyword id="KW-0175">Coiled coil</keyword>
<keyword id="KW-0963">Cytoplasm</keyword>
<keyword id="KW-0254">Endocytosis</keyword>
<keyword id="KW-0967">Endosome</keyword>
<keyword id="KW-0446">Lipid-binding</keyword>
<keyword id="KW-0472">Membrane</keyword>
<keyword id="KW-1185">Reference proteome</keyword>
<keyword id="KW-0728">SH3 domain</keyword>
<sequence>MSVAGLKKQFHKASQLFSEKISGAEGTKLDEEFLNMEKKIDITSKAVAEILSKATEYLQPNPAYRAKLGMLNTVSKLRGQVKATGYPQTEGLLGDCMLKYGKELGEDSAFGNSLVDVGEALKLMAEVKDSLDINVKQTFIDPLQLLQDKDLKEIGHHLRKLEGRRLDYDYKKRRVGKIPEEEIRQAVEKFEESKELAERSMFNFLENDVEQVSQLAVFVEAALDYHRQSTEILQELQSKLELRISLASKVPKREFMPKPVNMSSTDANGVGPSSSSKTPGTDTPADQPCCRGLYDFEPENEGELGFKEGDIITLTNQIDENWYEGMLRGESGFFPINYVEVIVPLPP</sequence>
<feature type="chain" id="PRO_0000146751" description="Endophilin-A3">
    <location>
        <begin position="1"/>
        <end position="347"/>
    </location>
</feature>
<feature type="domain" description="BAR" evidence="5">
    <location>
        <begin position="18"/>
        <end position="249"/>
    </location>
</feature>
<feature type="domain" description="SH3" evidence="4">
    <location>
        <begin position="285"/>
        <end position="344"/>
    </location>
</feature>
<feature type="region of interest" description="Membrane-binding amphipathic helix" evidence="1">
    <location>
        <begin position="1"/>
        <end position="21"/>
    </location>
</feature>
<feature type="region of interest" description="Required for dimerization upon membrane association" evidence="1">
    <location>
        <begin position="60"/>
        <end position="87"/>
    </location>
</feature>
<feature type="region of interest" description="Interaction with ARC" evidence="1">
    <location>
        <begin position="218"/>
        <end position="254"/>
    </location>
</feature>
<feature type="region of interest" description="Disordered" evidence="6">
    <location>
        <begin position="255"/>
        <end position="288"/>
    </location>
</feature>
<feature type="coiled-coil region" evidence="3">
    <location>
        <begin position="180"/>
        <end position="201"/>
    </location>
</feature>
<feature type="compositionally biased region" description="Polar residues" evidence="6">
    <location>
        <begin position="261"/>
        <end position="281"/>
    </location>
</feature>
<feature type="sequence conflict" description="In Ref. 2; AAH27096." evidence="7" ref="2">
    <original>A</original>
    <variation>S</variation>
    <location>
        <position position="285"/>
    </location>
</feature>
<organism>
    <name type="scientific">Mus musculus</name>
    <name type="common">Mouse</name>
    <dbReference type="NCBI Taxonomy" id="10090"/>
    <lineage>
        <taxon>Eukaryota</taxon>
        <taxon>Metazoa</taxon>
        <taxon>Chordata</taxon>
        <taxon>Craniata</taxon>
        <taxon>Vertebrata</taxon>
        <taxon>Euteleostomi</taxon>
        <taxon>Mammalia</taxon>
        <taxon>Eutheria</taxon>
        <taxon>Euarchontoglires</taxon>
        <taxon>Glires</taxon>
        <taxon>Rodentia</taxon>
        <taxon>Myomorpha</taxon>
        <taxon>Muroidea</taxon>
        <taxon>Muridae</taxon>
        <taxon>Murinae</taxon>
        <taxon>Mus</taxon>
        <taxon>Mus</taxon>
    </lineage>
</organism>
<comment type="function">
    <text evidence="1">Implicated in endocytosis. May recruit other proteins to membranes with high curvature (By similarity).</text>
</comment>
<comment type="subunit">
    <text evidence="1">Interacts with ARC, DNM1, SGIP1, SYNJ1 and DYDC1. Interacts with FASLG (By similarity). Interacts with ATXN2. Interacts with BIN2 (By similarity).</text>
</comment>
<comment type="subcellular location">
    <subcellularLocation>
        <location evidence="2">Cytoplasm</location>
    </subcellularLocation>
    <subcellularLocation>
        <location evidence="2">Early endosome membrane</location>
        <topology evidence="2">Peripheral membrane protein</topology>
    </subcellularLocation>
    <text evidence="2">Associated with postsynaptic endosomes in hippocampal neurons. Associated with presynaptic endosomes in olfactory neurons.</text>
</comment>
<comment type="domain">
    <text evidence="1">An N-terminal amphipathic helix, the BAR domain and a second amphipathic helix inserted into helix 1 of the BAR domain (N-BAR domain) induce membrane curvature and bind curved membranes.</text>
</comment>
<comment type="similarity">
    <text evidence="7">Belongs to the endophilin family.</text>
</comment>
<gene>
    <name type="primary">Sh3gl3</name>
    <name type="synonym">Sh3d2c</name>
    <name type="synonym">Sh3d2c2</name>
</gene>
<evidence type="ECO:0000250" key="1"/>
<evidence type="ECO:0000250" key="2">
    <source>
        <dbReference type="UniProtKB" id="O35180"/>
    </source>
</evidence>
<evidence type="ECO:0000255" key="3"/>
<evidence type="ECO:0000255" key="4">
    <source>
        <dbReference type="PROSITE-ProRule" id="PRU00192"/>
    </source>
</evidence>
<evidence type="ECO:0000255" key="5">
    <source>
        <dbReference type="PROSITE-ProRule" id="PRU00361"/>
    </source>
</evidence>
<evidence type="ECO:0000256" key="6">
    <source>
        <dbReference type="SAM" id="MobiDB-lite"/>
    </source>
</evidence>
<evidence type="ECO:0000305" key="7"/>
<dbReference type="EMBL" id="U58887">
    <property type="protein sequence ID" value="AAC72268.1"/>
    <property type="molecule type" value="mRNA"/>
</dbReference>
<dbReference type="EMBL" id="BC027096">
    <property type="protein sequence ID" value="AAH27096.1"/>
    <property type="molecule type" value="mRNA"/>
</dbReference>
<dbReference type="CCDS" id="CCDS90263.1"/>
<dbReference type="RefSeq" id="NP_059096.3">
    <property type="nucleotide sequence ID" value="NM_017400.6"/>
</dbReference>
<dbReference type="SMR" id="Q62421"/>
<dbReference type="BioGRID" id="203210">
    <property type="interactions" value="8"/>
</dbReference>
<dbReference type="FunCoup" id="Q62421">
    <property type="interactions" value="606"/>
</dbReference>
<dbReference type="IntAct" id="Q62421">
    <property type="interactions" value="2"/>
</dbReference>
<dbReference type="MINT" id="Q62421"/>
<dbReference type="STRING" id="10090.ENSMUSP00000032874"/>
<dbReference type="GlyGen" id="Q62421">
    <property type="glycosylation" value="1 site, 1 N-linked glycan (1 site)"/>
</dbReference>
<dbReference type="iPTMnet" id="Q62421"/>
<dbReference type="PhosphoSitePlus" id="Q62421"/>
<dbReference type="PaxDb" id="10090-ENSMUSP00000032874"/>
<dbReference type="PeptideAtlas" id="Q62421"/>
<dbReference type="ProteomicsDB" id="257140"/>
<dbReference type="Pumba" id="Q62421"/>
<dbReference type="DNASU" id="20408"/>
<dbReference type="GeneID" id="20408"/>
<dbReference type="KEGG" id="mmu:20408"/>
<dbReference type="UCSC" id="uc029wml.2">
    <property type="organism name" value="mouse"/>
</dbReference>
<dbReference type="AGR" id="MGI:700011"/>
<dbReference type="CTD" id="6457"/>
<dbReference type="MGI" id="MGI:700011">
    <property type="gene designation" value="Sh3gl3"/>
</dbReference>
<dbReference type="eggNOG" id="KOG1118">
    <property type="taxonomic scope" value="Eukaryota"/>
</dbReference>
<dbReference type="InParanoid" id="Q62421"/>
<dbReference type="OrthoDB" id="443981at2759"/>
<dbReference type="PhylomeDB" id="Q62421"/>
<dbReference type="TreeFam" id="TF313281"/>
<dbReference type="Reactome" id="R-MMU-182971">
    <property type="pathway name" value="EGFR downregulation"/>
</dbReference>
<dbReference type="Reactome" id="R-MMU-6807004">
    <property type="pathway name" value="Negative regulation of MET activity"/>
</dbReference>
<dbReference type="Reactome" id="R-MMU-8856825">
    <property type="pathway name" value="Cargo recognition for clathrin-mediated endocytosis"/>
</dbReference>
<dbReference type="Reactome" id="R-MMU-8856828">
    <property type="pathway name" value="Clathrin-mediated endocytosis"/>
</dbReference>
<dbReference type="BioGRID-ORCS" id="20408">
    <property type="hits" value="0 hits in 55 CRISPR screens"/>
</dbReference>
<dbReference type="ChiTaRS" id="Sh3gl3">
    <property type="organism name" value="mouse"/>
</dbReference>
<dbReference type="PRO" id="PR:Q62421"/>
<dbReference type="Proteomes" id="UP000000589">
    <property type="component" value="Unplaced"/>
</dbReference>
<dbReference type="RNAct" id="Q62421">
    <property type="molecule type" value="protein"/>
</dbReference>
<dbReference type="GO" id="GO:0005737">
    <property type="term" value="C:cytoplasm"/>
    <property type="evidence" value="ECO:0000314"/>
    <property type="project" value="MGI"/>
</dbReference>
<dbReference type="GO" id="GO:0031901">
    <property type="term" value="C:early endosome membrane"/>
    <property type="evidence" value="ECO:0007669"/>
    <property type="project" value="UniProtKB-SubCell"/>
</dbReference>
<dbReference type="GO" id="GO:0008289">
    <property type="term" value="F:lipid binding"/>
    <property type="evidence" value="ECO:0007669"/>
    <property type="project" value="UniProtKB-KW"/>
</dbReference>
<dbReference type="GO" id="GO:0006897">
    <property type="term" value="P:endocytosis"/>
    <property type="evidence" value="ECO:0007669"/>
    <property type="project" value="UniProtKB-KW"/>
</dbReference>
<dbReference type="CDD" id="cd07615">
    <property type="entry name" value="BAR_Endophilin_A3"/>
    <property type="match status" value="1"/>
</dbReference>
<dbReference type="CDD" id="cd11803">
    <property type="entry name" value="SH3_Endophilin_A"/>
    <property type="match status" value="1"/>
</dbReference>
<dbReference type="FunFam" id="2.30.30.40:FF:000053">
    <property type="entry name" value="endophilin-A1 isoform X2"/>
    <property type="match status" value="1"/>
</dbReference>
<dbReference type="FunFam" id="1.20.1270.60:FF:000021">
    <property type="entry name" value="Endophilin-A2 isoform 1"/>
    <property type="match status" value="1"/>
</dbReference>
<dbReference type="Gene3D" id="1.20.1270.60">
    <property type="entry name" value="Arfaptin homology (AH) domain/BAR domain"/>
    <property type="match status" value="1"/>
</dbReference>
<dbReference type="Gene3D" id="2.30.30.40">
    <property type="entry name" value="SH3 Domains"/>
    <property type="match status" value="1"/>
</dbReference>
<dbReference type="InterPro" id="IPR027267">
    <property type="entry name" value="AH/BAR_dom_sf"/>
</dbReference>
<dbReference type="InterPro" id="IPR004148">
    <property type="entry name" value="BAR_dom"/>
</dbReference>
<dbReference type="InterPro" id="IPR032469">
    <property type="entry name" value="Endophilin-A3_BAR"/>
</dbReference>
<dbReference type="InterPro" id="IPR035824">
    <property type="entry name" value="Endophilin_A_SH3"/>
</dbReference>
<dbReference type="InterPro" id="IPR050384">
    <property type="entry name" value="Endophilin_SH3RF"/>
</dbReference>
<dbReference type="InterPro" id="IPR036028">
    <property type="entry name" value="SH3-like_dom_sf"/>
</dbReference>
<dbReference type="InterPro" id="IPR001452">
    <property type="entry name" value="SH3_domain"/>
</dbReference>
<dbReference type="PANTHER" id="PTHR14167:SF45">
    <property type="entry name" value="ENDOPHILIN-A3"/>
    <property type="match status" value="1"/>
</dbReference>
<dbReference type="PANTHER" id="PTHR14167">
    <property type="entry name" value="SH3 DOMAIN-CONTAINING"/>
    <property type="match status" value="1"/>
</dbReference>
<dbReference type="Pfam" id="PF03114">
    <property type="entry name" value="BAR"/>
    <property type="match status" value="1"/>
</dbReference>
<dbReference type="Pfam" id="PF00018">
    <property type="entry name" value="SH3_1"/>
    <property type="match status" value="1"/>
</dbReference>
<dbReference type="PRINTS" id="PR00452">
    <property type="entry name" value="SH3DOMAIN"/>
</dbReference>
<dbReference type="SMART" id="SM00721">
    <property type="entry name" value="BAR"/>
    <property type="match status" value="1"/>
</dbReference>
<dbReference type="SMART" id="SM00326">
    <property type="entry name" value="SH3"/>
    <property type="match status" value="1"/>
</dbReference>
<dbReference type="SUPFAM" id="SSF103657">
    <property type="entry name" value="BAR/IMD domain-like"/>
    <property type="match status" value="1"/>
</dbReference>
<dbReference type="SUPFAM" id="SSF50044">
    <property type="entry name" value="SH3-domain"/>
    <property type="match status" value="1"/>
</dbReference>
<dbReference type="PROSITE" id="PS51021">
    <property type="entry name" value="BAR"/>
    <property type="match status" value="1"/>
</dbReference>
<dbReference type="PROSITE" id="PS50002">
    <property type="entry name" value="SH3"/>
    <property type="match status" value="1"/>
</dbReference>
<name>SH3G3_MOUSE</name>